<proteinExistence type="inferred from homology"/>
<evidence type="ECO:0000255" key="1">
    <source>
        <dbReference type="HAMAP-Rule" id="MF_01629"/>
    </source>
</evidence>
<sequence>MELEDIRRDYSLGGLRRADLPQEPVELFELWLKQAVEAKLTDPTAMTVATVDENGQPFQRIVLLKHFDKTGFVFYTNLGSRKAQQLEQHSKISLHFPWHPLERQVHITGTAEKLTALENMKYFTSRPKESQIAAWASKQSSRLTARAALEGKYLELKQKFAKGEIPVPKFWGGFRIKIDSIEFWQGGDHRLHDRFLYSKDQNDWQIDRLAP</sequence>
<organism>
    <name type="scientific">Aliivibrio fischeri (strain ATCC 700601 / ES114)</name>
    <name type="common">Vibrio fischeri</name>
    <dbReference type="NCBI Taxonomy" id="312309"/>
    <lineage>
        <taxon>Bacteria</taxon>
        <taxon>Pseudomonadati</taxon>
        <taxon>Pseudomonadota</taxon>
        <taxon>Gammaproteobacteria</taxon>
        <taxon>Vibrionales</taxon>
        <taxon>Vibrionaceae</taxon>
        <taxon>Aliivibrio</taxon>
    </lineage>
</organism>
<reference key="1">
    <citation type="journal article" date="2005" name="Proc. Natl. Acad. Sci. U.S.A.">
        <title>Complete genome sequence of Vibrio fischeri: a symbiotic bacterium with pathogenic congeners.</title>
        <authorList>
            <person name="Ruby E.G."/>
            <person name="Urbanowski M."/>
            <person name="Campbell J."/>
            <person name="Dunn A."/>
            <person name="Faini M."/>
            <person name="Gunsalus R."/>
            <person name="Lostroh P."/>
            <person name="Lupp C."/>
            <person name="McCann J."/>
            <person name="Millikan D."/>
            <person name="Schaefer A."/>
            <person name="Stabb E."/>
            <person name="Stevens A."/>
            <person name="Visick K."/>
            <person name="Whistler C."/>
            <person name="Greenberg E.P."/>
        </authorList>
    </citation>
    <scope>NUCLEOTIDE SEQUENCE [LARGE SCALE GENOMIC DNA]</scope>
    <source>
        <strain>ATCC 700601 / ES114</strain>
    </source>
</reference>
<comment type="function">
    <text evidence="1">Catalyzes the oxidation of either pyridoxine 5'-phosphate (PNP) or pyridoxamine 5'-phosphate (PMP) into pyridoxal 5'-phosphate (PLP).</text>
</comment>
<comment type="catalytic activity">
    <reaction evidence="1">
        <text>pyridoxamine 5'-phosphate + O2 + H2O = pyridoxal 5'-phosphate + H2O2 + NH4(+)</text>
        <dbReference type="Rhea" id="RHEA:15817"/>
        <dbReference type="ChEBI" id="CHEBI:15377"/>
        <dbReference type="ChEBI" id="CHEBI:15379"/>
        <dbReference type="ChEBI" id="CHEBI:16240"/>
        <dbReference type="ChEBI" id="CHEBI:28938"/>
        <dbReference type="ChEBI" id="CHEBI:58451"/>
        <dbReference type="ChEBI" id="CHEBI:597326"/>
        <dbReference type="EC" id="1.4.3.5"/>
    </reaction>
</comment>
<comment type="catalytic activity">
    <reaction evidence="1">
        <text>pyridoxine 5'-phosphate + O2 = pyridoxal 5'-phosphate + H2O2</text>
        <dbReference type="Rhea" id="RHEA:15149"/>
        <dbReference type="ChEBI" id="CHEBI:15379"/>
        <dbReference type="ChEBI" id="CHEBI:16240"/>
        <dbReference type="ChEBI" id="CHEBI:58589"/>
        <dbReference type="ChEBI" id="CHEBI:597326"/>
        <dbReference type="EC" id="1.4.3.5"/>
    </reaction>
</comment>
<comment type="cofactor">
    <cofactor evidence="1">
        <name>FMN</name>
        <dbReference type="ChEBI" id="CHEBI:58210"/>
    </cofactor>
    <text evidence="1">Binds 1 FMN per subunit.</text>
</comment>
<comment type="pathway">
    <text evidence="1">Cofactor metabolism; pyridoxal 5'-phosphate salvage; pyridoxal 5'-phosphate from pyridoxamine 5'-phosphate: step 1/1.</text>
</comment>
<comment type="pathway">
    <text evidence="1">Cofactor metabolism; pyridoxal 5'-phosphate salvage; pyridoxal 5'-phosphate from pyridoxine 5'-phosphate: step 1/1.</text>
</comment>
<comment type="subunit">
    <text evidence="1">Homodimer.</text>
</comment>
<comment type="similarity">
    <text evidence="1">Belongs to the pyridoxamine 5'-phosphate oxidase family.</text>
</comment>
<keyword id="KW-0285">Flavoprotein</keyword>
<keyword id="KW-0288">FMN</keyword>
<keyword id="KW-0560">Oxidoreductase</keyword>
<keyword id="KW-0664">Pyridoxine biosynthesis</keyword>
<keyword id="KW-1185">Reference proteome</keyword>
<protein>
    <recommendedName>
        <fullName evidence="1">Pyridoxine/pyridoxamine 5'-phosphate oxidase</fullName>
        <ecNumber evidence="1">1.4.3.5</ecNumber>
    </recommendedName>
    <alternativeName>
        <fullName evidence="1">PNP/PMP oxidase</fullName>
        <shortName evidence="1">PNPOx</shortName>
    </alternativeName>
    <alternativeName>
        <fullName evidence="1">Pyridoxal 5'-phosphate synthase</fullName>
    </alternativeName>
</protein>
<gene>
    <name evidence="1" type="primary">pdxH</name>
    <name type="ordered locus">VF_A1161</name>
</gene>
<feature type="chain" id="PRO_0000167766" description="Pyridoxine/pyridoxamine 5'-phosphate oxidase">
    <location>
        <begin position="1"/>
        <end position="211"/>
    </location>
</feature>
<feature type="binding site" evidence="1">
    <location>
        <begin position="7"/>
        <end position="10"/>
    </location>
    <ligand>
        <name>substrate</name>
    </ligand>
</feature>
<feature type="binding site" evidence="1">
    <location>
        <begin position="60"/>
        <end position="65"/>
    </location>
    <ligand>
        <name>FMN</name>
        <dbReference type="ChEBI" id="CHEBI:58210"/>
    </ligand>
</feature>
<feature type="binding site" evidence="1">
    <location>
        <position position="65"/>
    </location>
    <ligand>
        <name>substrate</name>
    </ligand>
</feature>
<feature type="binding site" evidence="1">
    <location>
        <begin position="75"/>
        <end position="76"/>
    </location>
    <ligand>
        <name>FMN</name>
        <dbReference type="ChEBI" id="CHEBI:58210"/>
    </ligand>
</feature>
<feature type="binding site" evidence="1">
    <location>
        <position position="81"/>
    </location>
    <ligand>
        <name>FMN</name>
        <dbReference type="ChEBI" id="CHEBI:58210"/>
    </ligand>
</feature>
<feature type="binding site" evidence="1">
    <location>
        <position position="82"/>
    </location>
    <ligand>
        <name>FMN</name>
        <dbReference type="ChEBI" id="CHEBI:58210"/>
    </ligand>
</feature>
<feature type="binding site" evidence="1">
    <location>
        <position position="104"/>
    </location>
    <ligand>
        <name>FMN</name>
        <dbReference type="ChEBI" id="CHEBI:58210"/>
    </ligand>
</feature>
<feature type="binding site" evidence="1">
    <location>
        <position position="122"/>
    </location>
    <ligand>
        <name>substrate</name>
    </ligand>
</feature>
<feature type="binding site" evidence="1">
    <location>
        <position position="126"/>
    </location>
    <ligand>
        <name>substrate</name>
    </ligand>
</feature>
<feature type="binding site" evidence="1">
    <location>
        <position position="130"/>
    </location>
    <ligand>
        <name>substrate</name>
    </ligand>
</feature>
<feature type="binding site" evidence="1">
    <location>
        <begin position="139"/>
        <end position="140"/>
    </location>
    <ligand>
        <name>FMN</name>
        <dbReference type="ChEBI" id="CHEBI:58210"/>
    </ligand>
</feature>
<feature type="binding site" evidence="1">
    <location>
        <position position="184"/>
    </location>
    <ligand>
        <name>FMN</name>
        <dbReference type="ChEBI" id="CHEBI:58210"/>
    </ligand>
</feature>
<feature type="binding site" evidence="1">
    <location>
        <begin position="190"/>
        <end position="192"/>
    </location>
    <ligand>
        <name>substrate</name>
    </ligand>
</feature>
<feature type="binding site" evidence="1">
    <location>
        <position position="194"/>
    </location>
    <ligand>
        <name>FMN</name>
        <dbReference type="ChEBI" id="CHEBI:58210"/>
    </ligand>
</feature>
<accession>Q5DYB5</accession>
<name>PDXH_ALIF1</name>
<dbReference type="EC" id="1.4.3.5" evidence="1"/>
<dbReference type="EMBL" id="CP000021">
    <property type="protein sequence ID" value="AAW88231.1"/>
    <property type="molecule type" value="Genomic_DNA"/>
</dbReference>
<dbReference type="RefSeq" id="WP_011263950.1">
    <property type="nucleotide sequence ID" value="NZ_CAWLES010000002.1"/>
</dbReference>
<dbReference type="RefSeq" id="YP_207119.1">
    <property type="nucleotide sequence ID" value="NC_006841.2"/>
</dbReference>
<dbReference type="SMR" id="Q5DYB5"/>
<dbReference type="STRING" id="312309.VF_A1161"/>
<dbReference type="EnsemblBacteria" id="AAW88231">
    <property type="protein sequence ID" value="AAW88231"/>
    <property type="gene ID" value="VF_A1161"/>
</dbReference>
<dbReference type="GeneID" id="54166482"/>
<dbReference type="KEGG" id="vfi:VF_A1161"/>
<dbReference type="PATRIC" id="fig|312309.11.peg.3760"/>
<dbReference type="eggNOG" id="COG0259">
    <property type="taxonomic scope" value="Bacteria"/>
</dbReference>
<dbReference type="HOGENOM" id="CLU_032263_2_2_6"/>
<dbReference type="OrthoDB" id="9780392at2"/>
<dbReference type="UniPathway" id="UPA01068">
    <property type="reaction ID" value="UER00304"/>
</dbReference>
<dbReference type="UniPathway" id="UPA01068">
    <property type="reaction ID" value="UER00305"/>
</dbReference>
<dbReference type="Proteomes" id="UP000000537">
    <property type="component" value="Chromosome II"/>
</dbReference>
<dbReference type="GO" id="GO:0010181">
    <property type="term" value="F:FMN binding"/>
    <property type="evidence" value="ECO:0007669"/>
    <property type="project" value="UniProtKB-UniRule"/>
</dbReference>
<dbReference type="GO" id="GO:0004733">
    <property type="term" value="F:pyridoxamine phosphate oxidase activity"/>
    <property type="evidence" value="ECO:0007669"/>
    <property type="project" value="UniProtKB-UniRule"/>
</dbReference>
<dbReference type="GO" id="GO:0008615">
    <property type="term" value="P:pyridoxine biosynthetic process"/>
    <property type="evidence" value="ECO:0007669"/>
    <property type="project" value="UniProtKB-KW"/>
</dbReference>
<dbReference type="Gene3D" id="2.30.110.10">
    <property type="entry name" value="Electron Transport, Fmn-binding Protein, Chain A"/>
    <property type="match status" value="1"/>
</dbReference>
<dbReference type="HAMAP" id="MF_01629">
    <property type="entry name" value="PdxH"/>
    <property type="match status" value="1"/>
</dbReference>
<dbReference type="InterPro" id="IPR000659">
    <property type="entry name" value="Pyridox_Oxase"/>
</dbReference>
<dbReference type="InterPro" id="IPR019740">
    <property type="entry name" value="Pyridox_Oxase_CS"/>
</dbReference>
<dbReference type="InterPro" id="IPR011576">
    <property type="entry name" value="Pyridox_Oxase_N"/>
</dbReference>
<dbReference type="InterPro" id="IPR019576">
    <property type="entry name" value="Pyridoxamine_oxidase_dimer_C"/>
</dbReference>
<dbReference type="InterPro" id="IPR012349">
    <property type="entry name" value="Split_barrel_FMN-bd"/>
</dbReference>
<dbReference type="NCBIfam" id="TIGR00558">
    <property type="entry name" value="pdxH"/>
    <property type="match status" value="1"/>
</dbReference>
<dbReference type="NCBIfam" id="NF004231">
    <property type="entry name" value="PRK05679.1"/>
    <property type="match status" value="1"/>
</dbReference>
<dbReference type="PANTHER" id="PTHR10851:SF0">
    <property type="entry name" value="PYRIDOXINE-5'-PHOSPHATE OXIDASE"/>
    <property type="match status" value="1"/>
</dbReference>
<dbReference type="PANTHER" id="PTHR10851">
    <property type="entry name" value="PYRIDOXINE-5-PHOSPHATE OXIDASE"/>
    <property type="match status" value="1"/>
</dbReference>
<dbReference type="Pfam" id="PF10590">
    <property type="entry name" value="PNP_phzG_C"/>
    <property type="match status" value="1"/>
</dbReference>
<dbReference type="Pfam" id="PF01243">
    <property type="entry name" value="PNPOx_N"/>
    <property type="match status" value="1"/>
</dbReference>
<dbReference type="PIRSF" id="PIRSF000190">
    <property type="entry name" value="Pyd_amn-ph_oxd"/>
    <property type="match status" value="1"/>
</dbReference>
<dbReference type="SUPFAM" id="SSF50475">
    <property type="entry name" value="FMN-binding split barrel"/>
    <property type="match status" value="1"/>
</dbReference>
<dbReference type="PROSITE" id="PS01064">
    <property type="entry name" value="PYRIDOX_OXIDASE"/>
    <property type="match status" value="1"/>
</dbReference>